<evidence type="ECO:0000255" key="1">
    <source>
        <dbReference type="HAMAP-Rule" id="MF_00658"/>
    </source>
</evidence>
<accession>B7IS03</accession>
<organism>
    <name type="scientific">Bacillus cereus (strain G9842)</name>
    <dbReference type="NCBI Taxonomy" id="405531"/>
    <lineage>
        <taxon>Bacteria</taxon>
        <taxon>Bacillati</taxon>
        <taxon>Bacillota</taxon>
        <taxon>Bacilli</taxon>
        <taxon>Bacillales</taxon>
        <taxon>Bacillaceae</taxon>
        <taxon>Bacillus</taxon>
        <taxon>Bacillus cereus group</taxon>
    </lineage>
</organism>
<reference key="1">
    <citation type="submission" date="2008-10" db="EMBL/GenBank/DDBJ databases">
        <title>Genome sequence of Bacillus cereus G9842.</title>
        <authorList>
            <person name="Dodson R.J."/>
            <person name="Durkin A.S."/>
            <person name="Rosovitz M.J."/>
            <person name="Rasko D.A."/>
            <person name="Hoffmaster A."/>
            <person name="Ravel J."/>
            <person name="Sutton G."/>
        </authorList>
    </citation>
    <scope>NUCLEOTIDE SEQUENCE [LARGE SCALE GENOMIC DNA]</scope>
    <source>
        <strain>G9842</strain>
    </source>
</reference>
<protein>
    <recommendedName>
        <fullName evidence="1">Ribosomal RNA large subunit methyltransferase H</fullName>
        <ecNumber evidence="1">2.1.1.177</ecNumber>
    </recommendedName>
    <alternativeName>
        <fullName evidence="1">23S rRNA (pseudouridine1915-N3)-methyltransferase</fullName>
    </alternativeName>
    <alternativeName>
        <fullName evidence="1">23S rRNA m3Psi1915 methyltransferase</fullName>
    </alternativeName>
    <alternativeName>
        <fullName evidence="1">rRNA (pseudouridine-N3-)-methyltransferase RlmH</fullName>
    </alternativeName>
</protein>
<proteinExistence type="inferred from homology"/>
<name>RLMH_BACC2</name>
<comment type="function">
    <text evidence="1">Specifically methylates the pseudouridine at position 1915 (m3Psi1915) in 23S rRNA.</text>
</comment>
<comment type="catalytic activity">
    <reaction evidence="1">
        <text>pseudouridine(1915) in 23S rRNA + S-adenosyl-L-methionine = N(3)-methylpseudouridine(1915) in 23S rRNA + S-adenosyl-L-homocysteine + H(+)</text>
        <dbReference type="Rhea" id="RHEA:42752"/>
        <dbReference type="Rhea" id="RHEA-COMP:10221"/>
        <dbReference type="Rhea" id="RHEA-COMP:10222"/>
        <dbReference type="ChEBI" id="CHEBI:15378"/>
        <dbReference type="ChEBI" id="CHEBI:57856"/>
        <dbReference type="ChEBI" id="CHEBI:59789"/>
        <dbReference type="ChEBI" id="CHEBI:65314"/>
        <dbReference type="ChEBI" id="CHEBI:74486"/>
        <dbReference type="EC" id="2.1.1.177"/>
    </reaction>
</comment>
<comment type="subunit">
    <text evidence="1">Homodimer.</text>
</comment>
<comment type="subcellular location">
    <subcellularLocation>
        <location evidence="1">Cytoplasm</location>
    </subcellularLocation>
</comment>
<comment type="similarity">
    <text evidence="1">Belongs to the RNA methyltransferase RlmH family.</text>
</comment>
<gene>
    <name evidence="1" type="primary">rlmH</name>
    <name type="ordered locus">BCG9842_B5353</name>
</gene>
<sequence length="159" mass="17927">MNISIISIGKLKEKYLKQGIAEYLKRLSAYAKVEVIELPDEKAPENLSEAEMLIVKEKEGIRILDKISDDTHVIALAIEGKQKSSEEFAVSLDRLATYGKSKVAFVIGGSLGLSSEVMKRSNESLSFSKMTLPHQLMRLVLLEQVYRAFRINRGEPYHK</sequence>
<dbReference type="EC" id="2.1.1.177" evidence="1"/>
<dbReference type="EMBL" id="CP001186">
    <property type="protein sequence ID" value="ACK97942.1"/>
    <property type="molecule type" value="Genomic_DNA"/>
</dbReference>
<dbReference type="RefSeq" id="WP_001027003.1">
    <property type="nucleotide sequence ID" value="NC_011772.1"/>
</dbReference>
<dbReference type="SMR" id="B7IS03"/>
<dbReference type="GeneID" id="93005667"/>
<dbReference type="KEGG" id="bcg:BCG9842_B5353"/>
<dbReference type="HOGENOM" id="CLU_100552_0_0_9"/>
<dbReference type="Proteomes" id="UP000006744">
    <property type="component" value="Chromosome"/>
</dbReference>
<dbReference type="GO" id="GO:0005737">
    <property type="term" value="C:cytoplasm"/>
    <property type="evidence" value="ECO:0007669"/>
    <property type="project" value="UniProtKB-SubCell"/>
</dbReference>
<dbReference type="GO" id="GO:0070038">
    <property type="term" value="F:rRNA (pseudouridine-N3-)-methyltransferase activity"/>
    <property type="evidence" value="ECO:0007669"/>
    <property type="project" value="UniProtKB-UniRule"/>
</dbReference>
<dbReference type="CDD" id="cd18081">
    <property type="entry name" value="RlmH-like"/>
    <property type="match status" value="1"/>
</dbReference>
<dbReference type="Gene3D" id="3.40.1280.10">
    <property type="match status" value="1"/>
</dbReference>
<dbReference type="HAMAP" id="MF_00658">
    <property type="entry name" value="23SrRNA_methyltr_H"/>
    <property type="match status" value="1"/>
</dbReference>
<dbReference type="InterPro" id="IPR029028">
    <property type="entry name" value="Alpha/beta_knot_MTases"/>
</dbReference>
<dbReference type="InterPro" id="IPR003742">
    <property type="entry name" value="RlmH-like"/>
</dbReference>
<dbReference type="InterPro" id="IPR029026">
    <property type="entry name" value="tRNA_m1G_MTases_N"/>
</dbReference>
<dbReference type="NCBIfam" id="NF000985">
    <property type="entry name" value="PRK00103.1-3"/>
    <property type="match status" value="1"/>
</dbReference>
<dbReference type="NCBIfam" id="TIGR00246">
    <property type="entry name" value="tRNA_RlmH_YbeA"/>
    <property type="match status" value="1"/>
</dbReference>
<dbReference type="PANTHER" id="PTHR33603">
    <property type="entry name" value="METHYLTRANSFERASE"/>
    <property type="match status" value="1"/>
</dbReference>
<dbReference type="PANTHER" id="PTHR33603:SF1">
    <property type="entry name" value="RIBOSOMAL RNA LARGE SUBUNIT METHYLTRANSFERASE H"/>
    <property type="match status" value="1"/>
</dbReference>
<dbReference type="Pfam" id="PF02590">
    <property type="entry name" value="SPOUT_MTase"/>
    <property type="match status" value="1"/>
</dbReference>
<dbReference type="PIRSF" id="PIRSF004505">
    <property type="entry name" value="MT_bac"/>
    <property type="match status" value="1"/>
</dbReference>
<dbReference type="SUPFAM" id="SSF75217">
    <property type="entry name" value="alpha/beta knot"/>
    <property type="match status" value="1"/>
</dbReference>
<feature type="chain" id="PRO_1000131225" description="Ribosomal RNA large subunit methyltransferase H">
    <location>
        <begin position="1"/>
        <end position="159"/>
    </location>
</feature>
<feature type="binding site" evidence="1">
    <location>
        <position position="76"/>
    </location>
    <ligand>
        <name>S-adenosyl-L-methionine</name>
        <dbReference type="ChEBI" id="CHEBI:59789"/>
    </ligand>
</feature>
<feature type="binding site" evidence="1">
    <location>
        <position position="108"/>
    </location>
    <ligand>
        <name>S-adenosyl-L-methionine</name>
        <dbReference type="ChEBI" id="CHEBI:59789"/>
    </ligand>
</feature>
<feature type="binding site" evidence="1">
    <location>
        <begin position="127"/>
        <end position="132"/>
    </location>
    <ligand>
        <name>S-adenosyl-L-methionine</name>
        <dbReference type="ChEBI" id="CHEBI:59789"/>
    </ligand>
</feature>
<keyword id="KW-0963">Cytoplasm</keyword>
<keyword id="KW-0489">Methyltransferase</keyword>
<keyword id="KW-0698">rRNA processing</keyword>
<keyword id="KW-0949">S-adenosyl-L-methionine</keyword>
<keyword id="KW-0808">Transferase</keyword>